<keyword id="KW-1185">Reference proteome</keyword>
<keyword id="KW-0687">Ribonucleoprotein</keyword>
<keyword id="KW-0689">Ribosomal protein</keyword>
<keyword id="KW-0694">RNA-binding</keyword>
<keyword id="KW-0699">rRNA-binding</keyword>
<evidence type="ECO:0000255" key="1">
    <source>
        <dbReference type="HAMAP-Rule" id="MF_01309"/>
    </source>
</evidence>
<evidence type="ECO:0000305" key="2"/>
<accession>C0QQM9</accession>
<feature type="chain" id="PRO_1000165504" description="Small ribosomal subunit protein uS3">
    <location>
        <begin position="1"/>
        <end position="227"/>
    </location>
</feature>
<feature type="domain" description="KH type-2" evidence="1">
    <location>
        <begin position="39"/>
        <end position="108"/>
    </location>
</feature>
<organism>
    <name type="scientific">Persephonella marina (strain DSM 14350 / EX-H1)</name>
    <dbReference type="NCBI Taxonomy" id="123214"/>
    <lineage>
        <taxon>Bacteria</taxon>
        <taxon>Pseudomonadati</taxon>
        <taxon>Aquificota</taxon>
        <taxon>Aquificia</taxon>
        <taxon>Aquificales</taxon>
        <taxon>Hydrogenothermaceae</taxon>
        <taxon>Persephonella</taxon>
    </lineage>
</organism>
<proteinExistence type="inferred from homology"/>
<dbReference type="EMBL" id="CP001230">
    <property type="protein sequence ID" value="ACO04636.1"/>
    <property type="molecule type" value="Genomic_DNA"/>
</dbReference>
<dbReference type="RefSeq" id="WP_012676873.1">
    <property type="nucleotide sequence ID" value="NC_012440.1"/>
</dbReference>
<dbReference type="SMR" id="C0QQM9"/>
<dbReference type="STRING" id="123214.PERMA_1202"/>
<dbReference type="PaxDb" id="123214-PERMA_1202"/>
<dbReference type="KEGG" id="pmx:PERMA_1202"/>
<dbReference type="eggNOG" id="COG0092">
    <property type="taxonomic scope" value="Bacteria"/>
</dbReference>
<dbReference type="HOGENOM" id="CLU_058591_0_2_0"/>
<dbReference type="OrthoDB" id="9806396at2"/>
<dbReference type="Proteomes" id="UP000001366">
    <property type="component" value="Chromosome"/>
</dbReference>
<dbReference type="GO" id="GO:0022627">
    <property type="term" value="C:cytosolic small ribosomal subunit"/>
    <property type="evidence" value="ECO:0007669"/>
    <property type="project" value="TreeGrafter"/>
</dbReference>
<dbReference type="GO" id="GO:0003729">
    <property type="term" value="F:mRNA binding"/>
    <property type="evidence" value="ECO:0007669"/>
    <property type="project" value="UniProtKB-UniRule"/>
</dbReference>
<dbReference type="GO" id="GO:0019843">
    <property type="term" value="F:rRNA binding"/>
    <property type="evidence" value="ECO:0007669"/>
    <property type="project" value="UniProtKB-UniRule"/>
</dbReference>
<dbReference type="GO" id="GO:0003735">
    <property type="term" value="F:structural constituent of ribosome"/>
    <property type="evidence" value="ECO:0007669"/>
    <property type="project" value="InterPro"/>
</dbReference>
<dbReference type="GO" id="GO:0006412">
    <property type="term" value="P:translation"/>
    <property type="evidence" value="ECO:0007669"/>
    <property type="project" value="UniProtKB-UniRule"/>
</dbReference>
<dbReference type="CDD" id="cd02412">
    <property type="entry name" value="KH-II_30S_S3"/>
    <property type="match status" value="1"/>
</dbReference>
<dbReference type="FunFam" id="3.30.300.20:FF:000001">
    <property type="entry name" value="30S ribosomal protein S3"/>
    <property type="match status" value="1"/>
</dbReference>
<dbReference type="Gene3D" id="3.30.300.20">
    <property type="match status" value="1"/>
</dbReference>
<dbReference type="Gene3D" id="3.30.1140.32">
    <property type="entry name" value="Ribosomal protein S3, C-terminal domain"/>
    <property type="match status" value="1"/>
</dbReference>
<dbReference type="HAMAP" id="MF_01309_B">
    <property type="entry name" value="Ribosomal_uS3_B"/>
    <property type="match status" value="1"/>
</dbReference>
<dbReference type="InterPro" id="IPR004087">
    <property type="entry name" value="KH_dom"/>
</dbReference>
<dbReference type="InterPro" id="IPR015946">
    <property type="entry name" value="KH_dom-like_a/b"/>
</dbReference>
<dbReference type="InterPro" id="IPR004044">
    <property type="entry name" value="KH_dom_type_2"/>
</dbReference>
<dbReference type="InterPro" id="IPR009019">
    <property type="entry name" value="KH_sf_prok-type"/>
</dbReference>
<dbReference type="InterPro" id="IPR036419">
    <property type="entry name" value="Ribosomal_S3_C_sf"/>
</dbReference>
<dbReference type="InterPro" id="IPR005704">
    <property type="entry name" value="Ribosomal_uS3_bac-typ"/>
</dbReference>
<dbReference type="InterPro" id="IPR001351">
    <property type="entry name" value="Ribosomal_uS3_C"/>
</dbReference>
<dbReference type="InterPro" id="IPR018280">
    <property type="entry name" value="Ribosomal_uS3_CS"/>
</dbReference>
<dbReference type="NCBIfam" id="TIGR01009">
    <property type="entry name" value="rpsC_bact"/>
    <property type="match status" value="1"/>
</dbReference>
<dbReference type="PANTHER" id="PTHR11760">
    <property type="entry name" value="30S/40S RIBOSOMAL PROTEIN S3"/>
    <property type="match status" value="1"/>
</dbReference>
<dbReference type="PANTHER" id="PTHR11760:SF19">
    <property type="entry name" value="SMALL RIBOSOMAL SUBUNIT PROTEIN US3C"/>
    <property type="match status" value="1"/>
</dbReference>
<dbReference type="Pfam" id="PF07650">
    <property type="entry name" value="KH_2"/>
    <property type="match status" value="1"/>
</dbReference>
<dbReference type="Pfam" id="PF00189">
    <property type="entry name" value="Ribosomal_S3_C"/>
    <property type="match status" value="1"/>
</dbReference>
<dbReference type="SMART" id="SM00322">
    <property type="entry name" value="KH"/>
    <property type="match status" value="1"/>
</dbReference>
<dbReference type="SUPFAM" id="SSF54814">
    <property type="entry name" value="Prokaryotic type KH domain (KH-domain type II)"/>
    <property type="match status" value="1"/>
</dbReference>
<dbReference type="SUPFAM" id="SSF54821">
    <property type="entry name" value="Ribosomal protein S3 C-terminal domain"/>
    <property type="match status" value="1"/>
</dbReference>
<dbReference type="PROSITE" id="PS50823">
    <property type="entry name" value="KH_TYPE_2"/>
    <property type="match status" value="1"/>
</dbReference>
<dbReference type="PROSITE" id="PS00548">
    <property type="entry name" value="RIBOSOMAL_S3"/>
    <property type="match status" value="1"/>
</dbReference>
<reference key="1">
    <citation type="journal article" date="2009" name="J. Bacteriol.">
        <title>Complete and draft genome sequences of six members of the Aquificales.</title>
        <authorList>
            <person name="Reysenbach A.-L."/>
            <person name="Hamamura N."/>
            <person name="Podar M."/>
            <person name="Griffiths E."/>
            <person name="Ferreira S."/>
            <person name="Hochstein R."/>
            <person name="Heidelberg J."/>
            <person name="Johnson J."/>
            <person name="Mead D."/>
            <person name="Pohorille A."/>
            <person name="Sarmiento M."/>
            <person name="Schweighofer K."/>
            <person name="Seshadri R."/>
            <person name="Voytek M.A."/>
        </authorList>
    </citation>
    <scope>NUCLEOTIDE SEQUENCE [LARGE SCALE GENOMIC DNA]</scope>
    <source>
        <strain>DSM 14350 / EX-H1</strain>
    </source>
</reference>
<protein>
    <recommendedName>
        <fullName evidence="1">Small ribosomal subunit protein uS3</fullName>
    </recommendedName>
    <alternativeName>
        <fullName evidence="2">30S ribosomal protein S3</fullName>
    </alternativeName>
</protein>
<name>RS3_PERMH</name>
<sequence>MGQKVHPIGFRLGVTKDWKSKWFADKKKYGQLLHEDVKIRKFVEERYKQAGIADVIIERLGEKVRIKILASKPGIVIGRKGAEVEELNKVLQAVTNAKDVTVNVDEVKKPELNAKLVAEDIALQLERRVSHRRAMKRAIDNAMKAGAKGIKVQVGGRIGGVDLARKEWFMAGRMPLQTIRADIDYGTARASTKYGILGVKVWIYKGDKLAEQKEEVLKKIEEELHTV</sequence>
<comment type="function">
    <text evidence="1">Binds the lower part of the 30S subunit head. Binds mRNA in the 70S ribosome, positioning it for translation.</text>
</comment>
<comment type="subunit">
    <text evidence="1">Part of the 30S ribosomal subunit. Forms a tight complex with proteins S10 and S14.</text>
</comment>
<comment type="similarity">
    <text evidence="1">Belongs to the universal ribosomal protein uS3 family.</text>
</comment>
<gene>
    <name evidence="1" type="primary">rpsC</name>
    <name type="ordered locus">PERMA_1202</name>
</gene>